<keyword id="KW-0227">DNA damage</keyword>
<keyword id="KW-0234">DNA repair</keyword>
<evidence type="ECO:0000255" key="1">
    <source>
        <dbReference type="HAMAP-Rule" id="MF_00149"/>
    </source>
</evidence>
<evidence type="ECO:0000256" key="2">
    <source>
        <dbReference type="SAM" id="MobiDB-lite"/>
    </source>
</evidence>
<name>MUTL_VIBCM</name>
<protein>
    <recommendedName>
        <fullName evidence="1">DNA mismatch repair protein MutL</fullName>
    </recommendedName>
</protein>
<feature type="chain" id="PRO_1000192190" description="DNA mismatch repair protein MutL">
    <location>
        <begin position="1"/>
        <end position="653"/>
    </location>
</feature>
<feature type="region of interest" description="Disordered" evidence="2">
    <location>
        <begin position="375"/>
        <end position="425"/>
    </location>
</feature>
<feature type="compositionally biased region" description="Basic and acidic residues" evidence="2">
    <location>
        <begin position="380"/>
        <end position="389"/>
    </location>
</feature>
<reference key="1">
    <citation type="journal article" date="2008" name="PLoS ONE">
        <title>A recalibrated molecular clock and independent origins for the cholera pandemic clones.</title>
        <authorList>
            <person name="Feng L."/>
            <person name="Reeves P.R."/>
            <person name="Lan R."/>
            <person name="Ren Y."/>
            <person name="Gao C."/>
            <person name="Zhou Z."/>
            <person name="Ren Y."/>
            <person name="Cheng J."/>
            <person name="Wang W."/>
            <person name="Wang J."/>
            <person name="Qian W."/>
            <person name="Li D."/>
            <person name="Wang L."/>
        </authorList>
    </citation>
    <scope>NUCLEOTIDE SEQUENCE [LARGE SCALE GENOMIC DNA]</scope>
    <source>
        <strain>M66-2</strain>
    </source>
</reference>
<gene>
    <name evidence="1" type="primary">mutL</name>
    <name type="ordered locus">VCM66_0329</name>
</gene>
<accession>C3LR77</accession>
<organism>
    <name type="scientific">Vibrio cholerae serotype O1 (strain M66-2)</name>
    <dbReference type="NCBI Taxonomy" id="579112"/>
    <lineage>
        <taxon>Bacteria</taxon>
        <taxon>Pseudomonadati</taxon>
        <taxon>Pseudomonadota</taxon>
        <taxon>Gammaproteobacteria</taxon>
        <taxon>Vibrionales</taxon>
        <taxon>Vibrionaceae</taxon>
        <taxon>Vibrio</taxon>
    </lineage>
</organism>
<proteinExistence type="inferred from homology"/>
<sequence>MTIRILPARLANQIAAGEVVERPASVVKELVENSLDAGATRIDIDLEKGGAKLIRIRDNGSGIDKDELGLALSRHATSKIHTLDDLEAIMSLGFRGEALASISSVSRLTLTSRTVAQEEAWSAYSEGRDMAVKLQPAAHPVGTTVEVLDLFFNTPARRKFLRTEKTEFTHIDELLKRIALSRFDVSFTLRHNGKIVRQYRAATTLPQQEKRLAAVCGNPFVQHMLRIELEHQGLKLHGWITTPEGARQQSDLQYCYVNGRMMRDKLINHAIRQSYETSLRVDQFATYVLFIELDPHQVDVNVHPAKHEVRFHQARLVHDFIYQALSSALVQGAQVMAPTINEGAFHLPHCAEEVNPPVVPMIDTTQQERVWQAVQNTPDYPRKAPRDNDRDESDNPQVRERAVSNPWVASPKTASTGKERYGSASVSKKEAAVYQTLMQTPDLSDEEPSTASTIVSSIEAVKANIAIEKLGKAIQVVAGQYLLMSSPQGCVLISLYQAQQLKLRGLLNAQHGALKAQPLLVPLALKLNESEWQVAQRHSSALLQLGIELKSRTNHSIMVMAVPQPLRQQNLQQLLPDLLSYAASCSESQALSHQALADWLTQRIVVEKRDYTLAEAIGLIAELEQLWQGNLPLQDPHFITLVDFSASITALHS</sequence>
<comment type="function">
    <text evidence="1">This protein is involved in the repair of mismatches in DNA. It is required for dam-dependent methyl-directed DNA mismatch repair. May act as a 'molecular matchmaker', a protein that promotes the formation of a stable complex between two or more DNA-binding proteins in an ATP-dependent manner without itself being part of a final effector complex.</text>
</comment>
<comment type="similarity">
    <text evidence="1">Belongs to the DNA mismatch repair MutL/HexB family.</text>
</comment>
<dbReference type="EMBL" id="CP001233">
    <property type="protein sequence ID" value="ACP04657.1"/>
    <property type="molecule type" value="Genomic_DNA"/>
</dbReference>
<dbReference type="RefSeq" id="WP_000155485.1">
    <property type="nucleotide sequence ID" value="NC_012578.1"/>
</dbReference>
<dbReference type="SMR" id="C3LR77"/>
<dbReference type="KEGG" id="vcm:VCM66_0329"/>
<dbReference type="HOGENOM" id="CLU_004131_5_1_6"/>
<dbReference type="Proteomes" id="UP000001217">
    <property type="component" value="Chromosome I"/>
</dbReference>
<dbReference type="GO" id="GO:0032300">
    <property type="term" value="C:mismatch repair complex"/>
    <property type="evidence" value="ECO:0007669"/>
    <property type="project" value="InterPro"/>
</dbReference>
<dbReference type="GO" id="GO:0005524">
    <property type="term" value="F:ATP binding"/>
    <property type="evidence" value="ECO:0007669"/>
    <property type="project" value="InterPro"/>
</dbReference>
<dbReference type="GO" id="GO:0016887">
    <property type="term" value="F:ATP hydrolysis activity"/>
    <property type="evidence" value="ECO:0007669"/>
    <property type="project" value="InterPro"/>
</dbReference>
<dbReference type="GO" id="GO:0140664">
    <property type="term" value="F:ATP-dependent DNA damage sensor activity"/>
    <property type="evidence" value="ECO:0007669"/>
    <property type="project" value="InterPro"/>
</dbReference>
<dbReference type="GO" id="GO:0030983">
    <property type="term" value="F:mismatched DNA binding"/>
    <property type="evidence" value="ECO:0007669"/>
    <property type="project" value="InterPro"/>
</dbReference>
<dbReference type="GO" id="GO:0006298">
    <property type="term" value="P:mismatch repair"/>
    <property type="evidence" value="ECO:0007669"/>
    <property type="project" value="UniProtKB-UniRule"/>
</dbReference>
<dbReference type="CDD" id="cd16926">
    <property type="entry name" value="HATPase_MutL-MLH-PMS-like"/>
    <property type="match status" value="1"/>
</dbReference>
<dbReference type="CDD" id="cd03482">
    <property type="entry name" value="MutL_Trans_MutL"/>
    <property type="match status" value="1"/>
</dbReference>
<dbReference type="FunFam" id="3.30.230.10:FF:000013">
    <property type="entry name" value="DNA mismatch repair endonuclease MutL"/>
    <property type="match status" value="1"/>
</dbReference>
<dbReference type="FunFam" id="3.30.565.10:FF:000003">
    <property type="entry name" value="DNA mismatch repair endonuclease MutL"/>
    <property type="match status" value="1"/>
</dbReference>
<dbReference type="Gene3D" id="3.30.230.10">
    <property type="match status" value="1"/>
</dbReference>
<dbReference type="Gene3D" id="3.30.565.10">
    <property type="entry name" value="Histidine kinase-like ATPase, C-terminal domain"/>
    <property type="match status" value="1"/>
</dbReference>
<dbReference type="Gene3D" id="3.30.1540.20">
    <property type="entry name" value="MutL, C-terminal domain, dimerisation subdomain"/>
    <property type="match status" value="1"/>
</dbReference>
<dbReference type="Gene3D" id="3.30.1370.100">
    <property type="entry name" value="MutL, C-terminal domain, regulatory subdomain"/>
    <property type="match status" value="1"/>
</dbReference>
<dbReference type="HAMAP" id="MF_00149">
    <property type="entry name" value="DNA_mis_repair"/>
    <property type="match status" value="1"/>
</dbReference>
<dbReference type="InterPro" id="IPR014762">
    <property type="entry name" value="DNA_mismatch_repair_CS"/>
</dbReference>
<dbReference type="InterPro" id="IPR020667">
    <property type="entry name" value="DNA_mismatch_repair_MutL"/>
</dbReference>
<dbReference type="InterPro" id="IPR013507">
    <property type="entry name" value="DNA_mismatch_S5_2-like"/>
</dbReference>
<dbReference type="InterPro" id="IPR036890">
    <property type="entry name" value="HATPase_C_sf"/>
</dbReference>
<dbReference type="InterPro" id="IPR002099">
    <property type="entry name" value="MutL/Mlh/PMS"/>
</dbReference>
<dbReference type="InterPro" id="IPR038973">
    <property type="entry name" value="MutL/Mlh/Pms-like"/>
</dbReference>
<dbReference type="InterPro" id="IPR014790">
    <property type="entry name" value="MutL_C"/>
</dbReference>
<dbReference type="InterPro" id="IPR042120">
    <property type="entry name" value="MutL_C_dimsub"/>
</dbReference>
<dbReference type="InterPro" id="IPR042121">
    <property type="entry name" value="MutL_C_regsub"/>
</dbReference>
<dbReference type="InterPro" id="IPR037198">
    <property type="entry name" value="MutL_C_sf"/>
</dbReference>
<dbReference type="InterPro" id="IPR020568">
    <property type="entry name" value="Ribosomal_Su5_D2-typ_SF"/>
</dbReference>
<dbReference type="InterPro" id="IPR014721">
    <property type="entry name" value="Ribsml_uS5_D2-typ_fold_subgr"/>
</dbReference>
<dbReference type="NCBIfam" id="TIGR00585">
    <property type="entry name" value="mutl"/>
    <property type="match status" value="1"/>
</dbReference>
<dbReference type="NCBIfam" id="NF000948">
    <property type="entry name" value="PRK00095.1-1"/>
    <property type="match status" value="1"/>
</dbReference>
<dbReference type="PANTHER" id="PTHR10073">
    <property type="entry name" value="DNA MISMATCH REPAIR PROTEIN MLH, PMS, MUTL"/>
    <property type="match status" value="1"/>
</dbReference>
<dbReference type="PANTHER" id="PTHR10073:SF12">
    <property type="entry name" value="DNA MISMATCH REPAIR PROTEIN MLH1"/>
    <property type="match status" value="1"/>
</dbReference>
<dbReference type="Pfam" id="PF01119">
    <property type="entry name" value="DNA_mis_repair"/>
    <property type="match status" value="1"/>
</dbReference>
<dbReference type="Pfam" id="PF13589">
    <property type="entry name" value="HATPase_c_3"/>
    <property type="match status" value="1"/>
</dbReference>
<dbReference type="Pfam" id="PF08676">
    <property type="entry name" value="MutL_C"/>
    <property type="match status" value="1"/>
</dbReference>
<dbReference type="SMART" id="SM01340">
    <property type="entry name" value="DNA_mis_repair"/>
    <property type="match status" value="1"/>
</dbReference>
<dbReference type="SMART" id="SM00853">
    <property type="entry name" value="MutL_C"/>
    <property type="match status" value="1"/>
</dbReference>
<dbReference type="SUPFAM" id="SSF55874">
    <property type="entry name" value="ATPase domain of HSP90 chaperone/DNA topoisomerase II/histidine kinase"/>
    <property type="match status" value="1"/>
</dbReference>
<dbReference type="SUPFAM" id="SSF118116">
    <property type="entry name" value="DNA mismatch repair protein MutL"/>
    <property type="match status" value="1"/>
</dbReference>
<dbReference type="SUPFAM" id="SSF54211">
    <property type="entry name" value="Ribosomal protein S5 domain 2-like"/>
    <property type="match status" value="1"/>
</dbReference>
<dbReference type="PROSITE" id="PS00058">
    <property type="entry name" value="DNA_MISMATCH_REPAIR_1"/>
    <property type="match status" value="1"/>
</dbReference>